<dbReference type="EC" id="2.6.99.3" evidence="2"/>
<dbReference type="EC" id="2.5.1.47" evidence="2"/>
<dbReference type="EMBL" id="AB516431">
    <property type="protein sequence ID" value="BAI70378.1"/>
    <property type="molecule type" value="Genomic_DNA"/>
</dbReference>
<dbReference type="PDB" id="3X43">
    <property type="method" value="X-ray"/>
    <property type="resolution" value="2.25 A"/>
    <property type="chains" value="A/B/C/D/E/F/G/H=1-324"/>
</dbReference>
<dbReference type="PDB" id="3X44">
    <property type="method" value="X-ray"/>
    <property type="resolution" value="1.90 A"/>
    <property type="chains" value="A/B=1-324"/>
</dbReference>
<dbReference type="PDBsum" id="3X43"/>
<dbReference type="PDBsum" id="3X44"/>
<dbReference type="SMR" id="D2Z027"/>
<dbReference type="KEGG" id="ag:BAI70378"/>
<dbReference type="BioCyc" id="MetaCyc:MONOMER-18016"/>
<dbReference type="BRENDA" id="2.5.1.47">
    <property type="organism ID" value="133"/>
</dbReference>
<dbReference type="BRENDA" id="2.6.99.3">
    <property type="organism ID" value="133"/>
</dbReference>
<dbReference type="EvolutionaryTrace" id="D2Z027"/>
<dbReference type="GO" id="GO:0004124">
    <property type="term" value="F:cysteine synthase activity"/>
    <property type="evidence" value="ECO:0000314"/>
    <property type="project" value="UniProtKB"/>
</dbReference>
<dbReference type="GO" id="GO:0017000">
    <property type="term" value="P:antibiotic biosynthetic process"/>
    <property type="evidence" value="ECO:0000315"/>
    <property type="project" value="UniProtKB"/>
</dbReference>
<dbReference type="GO" id="GO:0006535">
    <property type="term" value="P:cysteine biosynthetic process from serine"/>
    <property type="evidence" value="ECO:0007669"/>
    <property type="project" value="InterPro"/>
</dbReference>
<dbReference type="CDD" id="cd01561">
    <property type="entry name" value="CBS_like"/>
    <property type="match status" value="1"/>
</dbReference>
<dbReference type="FunFam" id="3.40.50.1100:FF:000006">
    <property type="entry name" value="Cysteine synthase"/>
    <property type="match status" value="1"/>
</dbReference>
<dbReference type="Gene3D" id="3.40.50.1100">
    <property type="match status" value="2"/>
</dbReference>
<dbReference type="InterPro" id="IPR005856">
    <property type="entry name" value="Cys_synth"/>
</dbReference>
<dbReference type="InterPro" id="IPR050214">
    <property type="entry name" value="Cys_Synth/Cystath_Beta-Synth"/>
</dbReference>
<dbReference type="InterPro" id="IPR005859">
    <property type="entry name" value="CysK"/>
</dbReference>
<dbReference type="InterPro" id="IPR001216">
    <property type="entry name" value="P-phosphate_BS"/>
</dbReference>
<dbReference type="InterPro" id="IPR001926">
    <property type="entry name" value="TrpB-like_PALP"/>
</dbReference>
<dbReference type="InterPro" id="IPR036052">
    <property type="entry name" value="TrpB-like_PALP_sf"/>
</dbReference>
<dbReference type="NCBIfam" id="TIGR01139">
    <property type="entry name" value="cysK"/>
    <property type="match status" value="1"/>
</dbReference>
<dbReference type="NCBIfam" id="TIGR01136">
    <property type="entry name" value="cysKM"/>
    <property type="match status" value="1"/>
</dbReference>
<dbReference type="PANTHER" id="PTHR10314">
    <property type="entry name" value="CYSTATHIONINE BETA-SYNTHASE"/>
    <property type="match status" value="1"/>
</dbReference>
<dbReference type="Pfam" id="PF00291">
    <property type="entry name" value="PALP"/>
    <property type="match status" value="1"/>
</dbReference>
<dbReference type="SUPFAM" id="SSF53686">
    <property type="entry name" value="Tryptophan synthase beta subunit-like PLP-dependent enzymes"/>
    <property type="match status" value="1"/>
</dbReference>
<dbReference type="PROSITE" id="PS00901">
    <property type="entry name" value="CYS_SYNTHASE"/>
    <property type="match status" value="1"/>
</dbReference>
<sequence>MPLFNSILDTIGRTPIVRLQRMAPEHTSVYVKVESFNPGGSVKDRLALSVVLDAEAKGLLKPGDTIVECTSGNVGIALAMVAAARGYRFVAVMGDTYSVERRKLIRAYGGKLVLFPGHLGSKGGNLIADELAEKYGWFRARQFDNPANPSYHRETTASEILADFAGKRLDHFVTGFGTTGTLTGVGQMLRVARPEVRVVALEPSNAAMLARGEWSPHQIQGLAPNFVPGVLDRSVIDDLVTMDEVTARDTSRRLAAEEGIFAGISAGATVATALSIAEHAPEGTVLLAMLPDTGERYLSTFLFDGVDEGSDDAWLASLDTGSGL</sequence>
<keyword id="KW-0002">3D-structure</keyword>
<keyword id="KW-0028">Amino-acid biosynthesis</keyword>
<keyword id="KW-0045">Antibiotic biosynthesis</keyword>
<keyword id="KW-0198">Cysteine biosynthesis</keyword>
<keyword id="KW-0663">Pyridoxal phosphate</keyword>
<keyword id="KW-0808">Transferase</keyword>
<gene>
    <name evidence="4" type="primary">dcsD</name>
</gene>
<reference key="1">
    <citation type="journal article" date="2010" name="Antimicrob. Agents Chemother.">
        <title>Molecular cloning and heterologous expression of a biosynthetic gene cluster for the antitubercular agent D-cycloserine produced by Streptomyces lavendulae.</title>
        <authorList>
            <person name="Kumagai T."/>
            <person name="Koyama Y."/>
            <person name="Oda K."/>
            <person name="Noda M."/>
            <person name="Matoba Y."/>
            <person name="Sugiyama M."/>
        </authorList>
    </citation>
    <scope>NUCLEOTIDE SEQUENCE [GENOMIC DNA]</scope>
    <scope>FUNCTION IN CYCLOSERINE BIOSYNTHESIS</scope>
    <source>
        <strain>ATCC 11924 / 8197-20</strain>
    </source>
</reference>
<reference key="2">
    <citation type="journal article" date="2013" name="Antimicrob. Agents Chemother.">
        <title>Establishment of an in vitro D-cycloserine-synthesizing system by using O-ureido-L-serine synthase and D-cycloserine synthetase found in the biosynthetic pathway.</title>
        <authorList>
            <person name="Uda N."/>
            <person name="Matoba Y."/>
            <person name="Kumagai T."/>
            <person name="Oda K."/>
            <person name="Noda M."/>
            <person name="Sugiyama M."/>
        </authorList>
    </citation>
    <scope>FUNCTION</scope>
    <scope>CATALYTIC ACTIVITY</scope>
    <scope>BIOPHYSICOCHEMICAL PROPERTIES</scope>
    <scope>SUBSTRATE SPECIFICITY</scope>
    <scope>COFACTOR</scope>
    <scope>SUBUNIT</scope>
    <source>
        <strain>ATCC 11924 / 8197-20</strain>
    </source>
</reference>
<reference key="3">
    <citation type="journal article" date="2015" name="Antimicrob. Agents Chemother.">
        <authorList>
            <person name="Uda N."/>
            <person name="Matoba Y."/>
            <person name="Kumagai T."/>
            <person name="Oda K."/>
            <person name="Noda M."/>
            <person name="Sugiyama M."/>
        </authorList>
    </citation>
    <scope>ERRATUM OF PUBMED:23529730</scope>
</reference>
<reference evidence="7 8" key="4">
    <citation type="journal article" date="2015" name="FEBS J.">
        <title>The structural and mutational analyses of O-ureido-L-serine synthase necessary for D-cycloserine biosynthesis.</title>
        <authorList>
            <person name="Uda N."/>
            <person name="Matoba Y."/>
            <person name="Oda K."/>
            <person name="Kumagai T."/>
            <person name="Sugiyama M."/>
        </authorList>
    </citation>
    <scope>X-RAY CRYSTALLOGRAPHY (1.90 ANGSTROMS)</scope>
    <scope>FUNCTION</scope>
    <scope>CATALYTIC ACTIVITY</scope>
    <scope>BIOPHYSICOCHEMICAL PROPERTIES</scope>
    <scope>SUBUNIT</scope>
    <scope>PYRIDOXAL PHOSPHATE AT LYS-43</scope>
    <scope>MUTAGENESIS OF LYS-43; VAL-74; TYR-97 AND SER-121</scope>
    <source>
        <strain>ATCC 11924 / 8197-20</strain>
    </source>
</reference>
<organism>
    <name type="scientific">Streptomyces lavendulae</name>
    <dbReference type="NCBI Taxonomy" id="1914"/>
    <lineage>
        <taxon>Bacteria</taxon>
        <taxon>Bacillati</taxon>
        <taxon>Actinomycetota</taxon>
        <taxon>Actinomycetes</taxon>
        <taxon>Kitasatosporales</taxon>
        <taxon>Streptomycetaceae</taxon>
        <taxon>Streptomyces</taxon>
    </lineage>
</organism>
<feature type="chain" id="PRO_0000424057" description="O-ureido-L-serine synthase">
    <location>
        <begin position="1"/>
        <end position="324"/>
    </location>
</feature>
<feature type="binding site" evidence="7">
    <location>
        <position position="73"/>
    </location>
    <ligand>
        <name>pyridoxal 5'-phosphate</name>
        <dbReference type="ChEBI" id="CHEBI:597326"/>
    </ligand>
</feature>
<feature type="binding site" evidence="7">
    <location>
        <begin position="177"/>
        <end position="181"/>
    </location>
    <ligand>
        <name>pyridoxal 5'-phosphate</name>
        <dbReference type="ChEBI" id="CHEBI:597326"/>
    </ligand>
</feature>
<feature type="binding site" evidence="7">
    <location>
        <position position="265"/>
    </location>
    <ligand>
        <name>pyridoxal 5'-phosphate</name>
        <dbReference type="ChEBI" id="CHEBI:597326"/>
    </ligand>
</feature>
<feature type="modified residue" description="N6-(pyridoxal phosphate)lysine" evidence="3 7">
    <location>
        <position position="43"/>
    </location>
</feature>
<feature type="mutagenesis site" description="Loss of catalytic activity, no longer binds N6-(pyridoxal phosphate)lysine." evidence="3">
    <original>K</original>
    <variation>A</variation>
    <location>
        <position position="43"/>
    </location>
</feature>
<feature type="mutagenesis site" description="KM for OAS is 61 mM, KM for H(2)S is unchanged." evidence="3">
    <original>V</original>
    <variation>T</variation>
    <location>
        <position position="74"/>
    </location>
</feature>
<feature type="mutagenesis site" description="KM for OAS is unchanged, KM for H(2)S is 0.073 mM." evidence="3">
    <original>Y</original>
    <variation>F</variation>
    <location>
        <position position="97"/>
    </location>
</feature>
<feature type="mutagenesis site" description="KM for OAS is 330 mM, KM for H(2)S is 0.084." evidence="3">
    <original>Y</original>
    <variation>M</variation>
    <location>
        <position position="97"/>
    </location>
</feature>
<feature type="mutagenesis site" description="KM for OAS is 140 mM, KM for H(2)S is 0.095 mM." evidence="3">
    <original>S</original>
    <variation>A</variation>
    <location>
        <position position="121"/>
    </location>
</feature>
<feature type="mutagenesis site" description="KM for OAS is 44 mM, KM for H(2)S is 0.20 mM." evidence="3">
    <original>S</original>
    <variation>M</variation>
    <location>
        <position position="121"/>
    </location>
</feature>
<feature type="strand" evidence="9">
    <location>
        <begin position="4"/>
        <end position="6"/>
    </location>
</feature>
<feature type="helix" evidence="10">
    <location>
        <begin position="7"/>
        <end position="10"/>
    </location>
</feature>
<feature type="strand" evidence="10">
    <location>
        <begin position="16"/>
        <end position="18"/>
    </location>
</feature>
<feature type="strand" evidence="10">
    <location>
        <begin position="20"/>
        <end position="23"/>
    </location>
</feature>
<feature type="strand" evidence="10">
    <location>
        <begin position="28"/>
        <end position="33"/>
    </location>
</feature>
<feature type="helix" evidence="10">
    <location>
        <begin position="34"/>
        <end position="36"/>
    </location>
</feature>
<feature type="helix" evidence="10">
    <location>
        <begin position="43"/>
        <end position="56"/>
    </location>
</feature>
<feature type="strand" evidence="10">
    <location>
        <begin position="65"/>
        <end position="72"/>
    </location>
</feature>
<feature type="helix" evidence="10">
    <location>
        <begin position="73"/>
        <end position="85"/>
    </location>
</feature>
<feature type="strand" evidence="10">
    <location>
        <begin position="88"/>
        <end position="94"/>
    </location>
</feature>
<feature type="helix" evidence="10">
    <location>
        <begin position="99"/>
        <end position="107"/>
    </location>
</feature>
<feature type="strand" evidence="10">
    <location>
        <begin position="111"/>
        <end position="115"/>
    </location>
</feature>
<feature type="helix" evidence="10">
    <location>
        <begin position="117"/>
        <end position="119"/>
    </location>
</feature>
<feature type="helix" evidence="10">
    <location>
        <begin position="120"/>
        <end position="135"/>
    </location>
</feature>
<feature type="turn" evidence="10">
    <location>
        <begin position="142"/>
        <end position="144"/>
    </location>
</feature>
<feature type="helix" evidence="10">
    <location>
        <begin position="147"/>
        <end position="154"/>
    </location>
</feature>
<feature type="helix" evidence="10">
    <location>
        <begin position="156"/>
        <end position="164"/>
    </location>
</feature>
<feature type="strand" evidence="10">
    <location>
        <begin position="171"/>
        <end position="174"/>
    </location>
</feature>
<feature type="strand" evidence="10">
    <location>
        <begin position="177"/>
        <end position="179"/>
    </location>
</feature>
<feature type="helix" evidence="10">
    <location>
        <begin position="180"/>
        <end position="192"/>
    </location>
</feature>
<feature type="strand" evidence="10">
    <location>
        <begin position="196"/>
        <end position="203"/>
    </location>
</feature>
<feature type="helix" evidence="9">
    <location>
        <begin position="204"/>
        <end position="206"/>
    </location>
</feature>
<feature type="helix" evidence="10">
    <location>
        <begin position="208"/>
        <end position="211"/>
    </location>
</feature>
<feature type="helix" evidence="10">
    <location>
        <begin position="233"/>
        <end position="235"/>
    </location>
</feature>
<feature type="strand" evidence="10">
    <location>
        <begin position="237"/>
        <end position="242"/>
    </location>
</feature>
<feature type="helix" evidence="10">
    <location>
        <begin position="244"/>
        <end position="257"/>
    </location>
</feature>
<feature type="helix" evidence="10">
    <location>
        <begin position="264"/>
        <end position="278"/>
    </location>
</feature>
<feature type="strand" evidence="10">
    <location>
        <begin position="285"/>
        <end position="290"/>
    </location>
</feature>
<feature type="helix" evidence="10">
    <location>
        <begin position="294"/>
        <end position="296"/>
    </location>
</feature>
<feature type="turn" evidence="9">
    <location>
        <begin position="298"/>
        <end position="300"/>
    </location>
</feature>
<feature type="helix" evidence="10">
    <location>
        <begin position="301"/>
        <end position="303"/>
    </location>
</feature>
<feature type="helix" evidence="10">
    <location>
        <begin position="312"/>
        <end position="319"/>
    </location>
</feature>
<accession>D2Z027</accession>
<proteinExistence type="evidence at protein level"/>
<protein>
    <recommendedName>
        <fullName evidence="5">O-ureido-L-serine synthase</fullName>
        <ecNumber evidence="2">2.6.99.3</ecNumber>
    </recommendedName>
    <alternativeName>
        <fullName>Cysteine synthase homolog DscD</fullName>
        <ecNumber evidence="2">2.5.1.47</ecNumber>
    </alternativeName>
    <alternativeName>
        <fullName>O-acetylserine sulfhydrylase</fullName>
    </alternativeName>
</protein>
<comment type="function">
    <text evidence="1 2 3">Involved in the biosynthesis of the antibiotic D-cycloserine (DCS), a cyclic structural analog of D-alanine, used as an antitubercular agent (PubMed:20086163). Catalyzes the addition of hydroxyurea on O-acetyl-L-serine (OAS) to yield O-ureido-L-serine. It prefers sulfide as the second substrate, followed by hydroxyurea, L-homocysteine, and thiosulfate (PubMed:26207937).</text>
</comment>
<comment type="catalytic activity">
    <reaction evidence="2 3">
        <text>hydroxyurea + O-acetyl-L-serine = O-ureido-L-serine + acetate + H(+)</text>
        <dbReference type="Rhea" id="RHEA:36263"/>
        <dbReference type="ChEBI" id="CHEBI:15378"/>
        <dbReference type="ChEBI" id="CHEBI:30089"/>
        <dbReference type="ChEBI" id="CHEBI:44423"/>
        <dbReference type="ChEBI" id="CHEBI:58340"/>
        <dbReference type="ChEBI" id="CHEBI:73389"/>
        <dbReference type="EC" id="2.6.99.3"/>
    </reaction>
</comment>
<comment type="catalytic activity">
    <reaction evidence="2 3">
        <text>O-acetyl-L-serine + hydrogen sulfide = L-cysteine + acetate</text>
        <dbReference type="Rhea" id="RHEA:14829"/>
        <dbReference type="ChEBI" id="CHEBI:29919"/>
        <dbReference type="ChEBI" id="CHEBI:30089"/>
        <dbReference type="ChEBI" id="CHEBI:35235"/>
        <dbReference type="ChEBI" id="CHEBI:58340"/>
        <dbReference type="EC" id="2.5.1.47"/>
    </reaction>
</comment>
<comment type="cofactor">
    <cofactor evidence="2 3 7">
        <name>pyridoxal 5'-phosphate</name>
        <dbReference type="ChEBI" id="CHEBI:597326"/>
    </cofactor>
</comment>
<comment type="biophysicochemical properties">
    <kinetics>
        <KM evidence="2">200 mM for OAS</KM>
        <KM evidence="3">190 mM for OAS</KM>
        <KM evidence="3">0.12 mM for hydrogen sulfide</KM>
    </kinetics>
</comment>
<comment type="subunit">
    <text evidence="2 3">Homotetramer.</text>
</comment>
<comment type="similarity">
    <text evidence="6">Belongs to the cysteine synthase/cystathionine beta-synthase family.</text>
</comment>
<evidence type="ECO:0000269" key="1">
    <source>
    </source>
</evidence>
<evidence type="ECO:0000269" key="2">
    <source>
    </source>
</evidence>
<evidence type="ECO:0000269" key="3">
    <source>
    </source>
</evidence>
<evidence type="ECO:0000303" key="4">
    <source>
    </source>
</evidence>
<evidence type="ECO:0000303" key="5">
    <source>
    </source>
</evidence>
<evidence type="ECO:0000305" key="6"/>
<evidence type="ECO:0007744" key="7">
    <source>
        <dbReference type="PDB" id="3X43"/>
    </source>
</evidence>
<evidence type="ECO:0007744" key="8">
    <source>
        <dbReference type="PDB" id="3X44"/>
    </source>
</evidence>
<evidence type="ECO:0007829" key="9">
    <source>
        <dbReference type="PDB" id="3X43"/>
    </source>
</evidence>
<evidence type="ECO:0007829" key="10">
    <source>
        <dbReference type="PDB" id="3X44"/>
    </source>
</evidence>
<name>DCSD_STRLA</name>